<organism>
    <name type="scientific">Saccharomyces cerevisiae (strain ATCC 204508 / S288c)</name>
    <name type="common">Baker's yeast</name>
    <dbReference type="NCBI Taxonomy" id="559292"/>
    <lineage>
        <taxon>Eukaryota</taxon>
        <taxon>Fungi</taxon>
        <taxon>Dikarya</taxon>
        <taxon>Ascomycota</taxon>
        <taxon>Saccharomycotina</taxon>
        <taxon>Saccharomycetes</taxon>
        <taxon>Saccharomycetales</taxon>
        <taxon>Saccharomycetaceae</taxon>
        <taxon>Saccharomyces</taxon>
    </lineage>
</organism>
<proteinExistence type="evidence at protein level"/>
<evidence type="ECO:0000256" key="1">
    <source>
        <dbReference type="SAM" id="MobiDB-lite"/>
    </source>
</evidence>
<evidence type="ECO:0000269" key="2">
    <source>
    </source>
</evidence>
<evidence type="ECO:0000269" key="3">
    <source>
    </source>
</evidence>
<evidence type="ECO:0000269" key="4">
    <source>
    </source>
</evidence>
<evidence type="ECO:0000269" key="5">
    <source>
    </source>
</evidence>
<evidence type="ECO:0000269" key="6">
    <source>
    </source>
</evidence>
<evidence type="ECO:0000269" key="7">
    <source>
    </source>
</evidence>
<evidence type="ECO:0000305" key="8"/>
<evidence type="ECO:0007829" key="9">
    <source>
        <dbReference type="PDB" id="4QMF"/>
    </source>
</evidence>
<keyword id="KW-0002">3D-structure</keyword>
<keyword id="KW-0539">Nucleus</keyword>
<keyword id="KW-1185">Reference proteome</keyword>
<keyword id="KW-0687">Ribonucleoprotein</keyword>
<keyword id="KW-0690">Ribosome biogenesis</keyword>
<keyword id="KW-0694">RNA-binding</keyword>
<keyword id="KW-0698">rRNA processing</keyword>
<feature type="chain" id="PRO_0000202553" description="KRR1 small subunit processome component">
    <location>
        <begin position="1"/>
        <end position="316"/>
    </location>
</feature>
<feature type="domain" description="KH">
    <location>
        <begin position="122"/>
        <end position="192"/>
    </location>
</feature>
<feature type="region of interest" description="Disordered" evidence="1">
    <location>
        <begin position="279"/>
        <end position="316"/>
    </location>
</feature>
<feature type="compositionally biased region" description="Basic and acidic residues" evidence="1">
    <location>
        <begin position="279"/>
        <end position="304"/>
    </location>
</feature>
<feature type="mutagenesis site" description="In temperature-sensitive mutant KRR1-17; grows normally at 25 degrees Celsius but fails to grow at 35 degrees Celsius; when associated with N-66; R-162 and A-261." evidence="2">
    <original>K</original>
    <variation>E</variation>
    <location>
        <position position="20"/>
    </location>
</feature>
<feature type="mutagenesis site" description="In temperature-sensitive mutant KRR1-18; grows normally at 25 degrees Celsius but fails to grow at 35 degrees Celsius; when associated with S-95 and G-207." evidence="2">
    <original>F</original>
    <variation>L</variation>
    <location>
        <position position="45"/>
    </location>
</feature>
<feature type="mutagenesis site" description="In temperature-sensitive mutant KRR1-17; grows normally at 25 degrees Celsius but fails to grow at 35 degrees Celsius; when associated with E-20; R-162 and A-261." evidence="2">
    <original>K</original>
    <variation>N</variation>
    <location>
        <position position="66"/>
    </location>
</feature>
<feature type="mutagenesis site" description="In temperature-sensitive mutant KRR1-18; grows normally at 25 degrees Celsius but fails to grow at 35 degrees Celsius; when associated with L-45 and G-207." evidence="2">
    <original>L</original>
    <variation>S</variation>
    <location>
        <position position="95"/>
    </location>
</feature>
<feature type="mutagenesis site" description="In temperature-sensitive mutant KRR1-17; grows normally at 25 degrees Celsius but fails to grow at 35 degrees Celsius; when associated with E-20; N-66 and A-261." evidence="2">
    <original>C</original>
    <variation>R</variation>
    <location>
        <position position="162"/>
    </location>
</feature>
<feature type="mutagenesis site" description="In temperature-sensitive mutant KRR1-18; grows normally at 25 degrees Celsius but fails to grow at 35 degrees Celsius; when associated with L-45 and S-95." evidence="2">
    <original>R</original>
    <variation>G</variation>
    <location>
        <position position="207"/>
    </location>
</feature>
<feature type="mutagenesis site" description="In temperature-sensitive mutant KRR1-17; grows normally at 25 degrees Celsius but fails to grow at 35 degrees Celsius; when associated with E-20; N-66 and R-162." evidence="2">
    <original>D</original>
    <variation>A</variation>
    <location>
        <position position="261"/>
    </location>
</feature>
<feature type="strand" evidence="9">
    <location>
        <begin position="40"/>
        <end position="44"/>
    </location>
</feature>
<feature type="helix" evidence="9">
    <location>
        <begin position="47"/>
        <end position="49"/>
    </location>
</feature>
<feature type="helix" evidence="9">
    <location>
        <begin position="50"/>
        <end position="65"/>
    </location>
</feature>
<feature type="turn" evidence="9">
    <location>
        <begin position="66"/>
        <end position="68"/>
    </location>
</feature>
<feature type="strand" evidence="9">
    <location>
        <begin position="70"/>
        <end position="74"/>
    </location>
</feature>
<feature type="turn" evidence="9">
    <location>
        <begin position="75"/>
        <end position="78"/>
    </location>
</feature>
<feature type="strand" evidence="9">
    <location>
        <begin position="79"/>
        <end position="83"/>
    </location>
</feature>
<feature type="helix" evidence="9">
    <location>
        <begin position="93"/>
        <end position="105"/>
    </location>
</feature>
<feature type="helix" evidence="9">
    <location>
        <begin position="110"/>
        <end position="113"/>
    </location>
</feature>
<feature type="helix" evidence="9">
    <location>
        <begin position="114"/>
        <end position="117"/>
    </location>
</feature>
<feature type="strand" evidence="9">
    <location>
        <begin position="118"/>
        <end position="120"/>
    </location>
</feature>
<feature type="strand" evidence="9">
    <location>
        <begin position="122"/>
        <end position="127"/>
    </location>
</feature>
<feature type="strand" evidence="9">
    <location>
        <begin position="133"/>
        <end position="135"/>
    </location>
</feature>
<feature type="helix" evidence="9">
    <location>
        <begin position="136"/>
        <end position="146"/>
    </location>
</feature>
<feature type="helix" evidence="9">
    <location>
        <begin position="148"/>
        <end position="150"/>
    </location>
</feature>
<feature type="helix" evidence="9">
    <location>
        <begin position="151"/>
        <end position="160"/>
    </location>
</feature>
<feature type="strand" evidence="9">
    <location>
        <begin position="163"/>
        <end position="167"/>
    </location>
</feature>
<feature type="strand" evidence="9">
    <location>
        <begin position="170"/>
        <end position="175"/>
    </location>
</feature>
<feature type="helix" evidence="9">
    <location>
        <begin position="177"/>
        <end position="191"/>
    </location>
</feature>
<feature type="helix" evidence="9">
    <location>
        <begin position="197"/>
        <end position="209"/>
    </location>
</feature>
<accession>P25586</accession>
<accession>D6VQV7</accession>
<sequence length="316" mass="37159">MVSTHNRDKPWDTDDIDKWKIEEFKEEDNASGQPFAEESSFMTLFPKYRESYLKTIWNDVTRALDKHNIACVLDLVEGSMTVKTTRKTYDPAIILKARDLIKLLARSVPFPQAVKILQDDMACDVIKIGNFVTNKERFVKRRQRLVGPNGNTLKALELLTKCYILVQGNTVSAMGPFKGLKEVRRVVEDCMKNIHPIYHIKELMIKRELAKRPELANEDWSRFLPMFKKRNVARKKPKKIRNVEKKVYTPFPPAQLPRKVDLEIESGEYFLSKREKQMKKLNEQKEKQMEREIERQEERAKDFIAPEEEAYKPNQN</sequence>
<dbReference type="EMBL" id="X59720">
    <property type="protein sequence ID" value="CAA42386.1"/>
    <property type="molecule type" value="Genomic_DNA"/>
</dbReference>
<dbReference type="EMBL" id="AY692923">
    <property type="protein sequence ID" value="AAT92942.1"/>
    <property type="molecule type" value="Genomic_DNA"/>
</dbReference>
<dbReference type="EMBL" id="BK006937">
    <property type="protein sequence ID" value="DAA07426.1"/>
    <property type="molecule type" value="Genomic_DNA"/>
</dbReference>
<dbReference type="PIR" id="S19389">
    <property type="entry name" value="S19389"/>
</dbReference>
<dbReference type="RefSeq" id="NP_009872.1">
    <property type="nucleotide sequence ID" value="NM_001178703.1"/>
</dbReference>
<dbReference type="PDB" id="4QMF">
    <property type="method" value="X-ray"/>
    <property type="resolution" value="2.80 A"/>
    <property type="chains" value="B/D=32-222"/>
</dbReference>
<dbReference type="PDB" id="5WLC">
    <property type="method" value="EM"/>
    <property type="resolution" value="3.80 A"/>
    <property type="chains" value="NK=1-316"/>
</dbReference>
<dbReference type="PDB" id="5WYJ">
    <property type="method" value="EM"/>
    <property type="resolution" value="8.70 A"/>
    <property type="chains" value="K1=1-316"/>
</dbReference>
<dbReference type="PDB" id="5WYK">
    <property type="method" value="EM"/>
    <property type="resolution" value="4.50 A"/>
    <property type="chains" value="K1=1-316"/>
</dbReference>
<dbReference type="PDB" id="6KE6">
    <property type="method" value="EM"/>
    <property type="resolution" value="3.40 A"/>
    <property type="chains" value="RC=1-316"/>
</dbReference>
<dbReference type="PDB" id="6LQP">
    <property type="method" value="EM"/>
    <property type="resolution" value="3.20 A"/>
    <property type="chains" value="RC=1-316"/>
</dbReference>
<dbReference type="PDB" id="6LQQ">
    <property type="method" value="EM"/>
    <property type="resolution" value="4.10 A"/>
    <property type="chains" value="RC=1-316"/>
</dbReference>
<dbReference type="PDB" id="6LQU">
    <property type="method" value="EM"/>
    <property type="resolution" value="3.70 A"/>
    <property type="chains" value="RC=1-316"/>
</dbReference>
<dbReference type="PDB" id="6ZQA">
    <property type="method" value="EM"/>
    <property type="resolution" value="4.40 A"/>
    <property type="chains" value="JO=1-316"/>
</dbReference>
<dbReference type="PDB" id="6ZQB">
    <property type="method" value="EM"/>
    <property type="resolution" value="3.90 A"/>
    <property type="chains" value="JO=1-316"/>
</dbReference>
<dbReference type="PDB" id="6ZQC">
    <property type="method" value="EM"/>
    <property type="resolution" value="3.80 A"/>
    <property type="chains" value="JO=1-316"/>
</dbReference>
<dbReference type="PDB" id="7AJT">
    <property type="method" value="EM"/>
    <property type="resolution" value="4.60 A"/>
    <property type="chains" value="JO=1-316"/>
</dbReference>
<dbReference type="PDB" id="7D5S">
    <property type="method" value="EM"/>
    <property type="resolution" value="4.60 A"/>
    <property type="chains" value="RC=1-316"/>
</dbReference>
<dbReference type="PDB" id="7SUK">
    <property type="method" value="EM"/>
    <property type="resolution" value="3.99 A"/>
    <property type="chains" value="NK=38-212"/>
</dbReference>
<dbReference type="PDBsum" id="4QMF"/>
<dbReference type="PDBsum" id="5WLC"/>
<dbReference type="PDBsum" id="5WYJ"/>
<dbReference type="PDBsum" id="5WYK"/>
<dbReference type="PDBsum" id="6KE6"/>
<dbReference type="PDBsum" id="6LQP"/>
<dbReference type="PDBsum" id="6LQQ"/>
<dbReference type="PDBsum" id="6LQU"/>
<dbReference type="PDBsum" id="6ZQA"/>
<dbReference type="PDBsum" id="6ZQB"/>
<dbReference type="PDBsum" id="6ZQC"/>
<dbReference type="PDBsum" id="7AJT"/>
<dbReference type="PDBsum" id="7D5S"/>
<dbReference type="PDBsum" id="7SUK"/>
<dbReference type="EMDB" id="EMD-0949"/>
<dbReference type="EMDB" id="EMD-0950"/>
<dbReference type="EMDB" id="EMD-0954"/>
<dbReference type="EMDB" id="EMD-11357"/>
<dbReference type="EMDB" id="EMD-11358"/>
<dbReference type="EMDB" id="EMD-11359"/>
<dbReference type="EMDB" id="EMD-11807"/>
<dbReference type="EMDB" id="EMD-25441"/>
<dbReference type="EMDB" id="EMD-30584"/>
<dbReference type="EMDB" id="EMD-6695"/>
<dbReference type="EMDB" id="EMD-6696"/>
<dbReference type="EMDB" id="EMD-9964"/>
<dbReference type="SMR" id="P25586"/>
<dbReference type="BioGRID" id="30927">
    <property type="interactions" value="751"/>
</dbReference>
<dbReference type="ComplexPortal" id="CPX-1604">
    <property type="entry name" value="Small ribosomal subunit processome"/>
</dbReference>
<dbReference type="DIP" id="DIP-1408N"/>
<dbReference type="FunCoup" id="P25586">
    <property type="interactions" value="1357"/>
</dbReference>
<dbReference type="IntAct" id="P25586">
    <property type="interactions" value="113"/>
</dbReference>
<dbReference type="MINT" id="P25586"/>
<dbReference type="STRING" id="4932.YCL059C"/>
<dbReference type="iPTMnet" id="P25586"/>
<dbReference type="PaxDb" id="4932-YCL059C"/>
<dbReference type="PeptideAtlas" id="P25586"/>
<dbReference type="EnsemblFungi" id="YCL059C_mRNA">
    <property type="protein sequence ID" value="YCL059C"/>
    <property type="gene ID" value="YCL059C"/>
</dbReference>
<dbReference type="GeneID" id="850298"/>
<dbReference type="KEGG" id="sce:YCL059C"/>
<dbReference type="AGR" id="SGD:S000000564"/>
<dbReference type="SGD" id="S000000564">
    <property type="gene designation" value="KRR1"/>
</dbReference>
<dbReference type="VEuPathDB" id="FungiDB:YCL059C"/>
<dbReference type="eggNOG" id="KOG2874">
    <property type="taxonomic scope" value="Eukaryota"/>
</dbReference>
<dbReference type="GeneTree" id="ENSGT00390000018775"/>
<dbReference type="HOGENOM" id="CLU_040185_0_2_1"/>
<dbReference type="InParanoid" id="P25586"/>
<dbReference type="OMA" id="TPDIDKW"/>
<dbReference type="OrthoDB" id="441223at2759"/>
<dbReference type="BioCyc" id="YEAST:G3O-29310-MONOMER"/>
<dbReference type="Reactome" id="R-SCE-6791226">
    <property type="pathway name" value="Major pathway of rRNA processing in the nucleolus and cytosol"/>
</dbReference>
<dbReference type="BioGRID-ORCS" id="850298">
    <property type="hits" value="8 hits in 10 CRISPR screens"/>
</dbReference>
<dbReference type="CD-CODE" id="BDAE0F88">
    <property type="entry name" value="Nucleolus"/>
</dbReference>
<dbReference type="EvolutionaryTrace" id="P25586"/>
<dbReference type="PRO" id="PR:P25586"/>
<dbReference type="Proteomes" id="UP000002311">
    <property type="component" value="Chromosome III"/>
</dbReference>
<dbReference type="RNAct" id="P25586">
    <property type="molecule type" value="protein"/>
</dbReference>
<dbReference type="GO" id="GO:0030686">
    <property type="term" value="C:90S preribosome"/>
    <property type="evidence" value="ECO:0007005"/>
    <property type="project" value="SGD"/>
</dbReference>
<dbReference type="GO" id="GO:0005730">
    <property type="term" value="C:nucleolus"/>
    <property type="evidence" value="ECO:0000314"/>
    <property type="project" value="SGD"/>
</dbReference>
<dbReference type="GO" id="GO:0005654">
    <property type="term" value="C:nucleoplasm"/>
    <property type="evidence" value="ECO:0000304"/>
    <property type="project" value="Reactome"/>
</dbReference>
<dbReference type="GO" id="GO:0030688">
    <property type="term" value="C:preribosome, small subunit precursor"/>
    <property type="evidence" value="ECO:0000314"/>
    <property type="project" value="GO_Central"/>
</dbReference>
<dbReference type="GO" id="GO:0032040">
    <property type="term" value="C:small-subunit processome"/>
    <property type="evidence" value="ECO:0000314"/>
    <property type="project" value="SGD"/>
</dbReference>
<dbReference type="GO" id="GO:0003723">
    <property type="term" value="F:RNA binding"/>
    <property type="evidence" value="ECO:0007669"/>
    <property type="project" value="UniProtKB-KW"/>
</dbReference>
<dbReference type="GO" id="GO:0000447">
    <property type="term" value="P:endonucleolytic cleavage in ITS1 to separate SSU-rRNA from 5.8S rRNA and LSU-rRNA from tricistronic rRNA transcript (SSU-rRNA, 5.8S rRNA, LSU-rRNA)"/>
    <property type="evidence" value="ECO:0000315"/>
    <property type="project" value="SGD"/>
</dbReference>
<dbReference type="GO" id="GO:0030490">
    <property type="term" value="P:maturation of SSU-rRNA"/>
    <property type="evidence" value="ECO:0000303"/>
    <property type="project" value="ComplexPortal"/>
</dbReference>
<dbReference type="GO" id="GO:0042274">
    <property type="term" value="P:ribosomal small subunit biogenesis"/>
    <property type="evidence" value="ECO:0000315"/>
    <property type="project" value="SGD"/>
</dbReference>
<dbReference type="GO" id="GO:0006364">
    <property type="term" value="P:rRNA processing"/>
    <property type="evidence" value="ECO:0000315"/>
    <property type="project" value="SGD"/>
</dbReference>
<dbReference type="CDD" id="cd22393">
    <property type="entry name" value="KH-I_KRR1_rpt1"/>
    <property type="match status" value="1"/>
</dbReference>
<dbReference type="CDD" id="cd22394">
    <property type="entry name" value="KH-I_KRR1_rpt2"/>
    <property type="match status" value="1"/>
</dbReference>
<dbReference type="FunFam" id="3.30.1370.10:FF:000011">
    <property type="entry name" value="KRR1 small subunit processome component"/>
    <property type="match status" value="1"/>
</dbReference>
<dbReference type="FunFam" id="3.30.1370.10:FF:000014">
    <property type="entry name" value="KRR1 small subunit processome component"/>
    <property type="match status" value="1"/>
</dbReference>
<dbReference type="Gene3D" id="3.30.1370.10">
    <property type="entry name" value="K Homology domain, type 1"/>
    <property type="match status" value="2"/>
</dbReference>
<dbReference type="InterPro" id="IPR004087">
    <property type="entry name" value="KH_dom"/>
</dbReference>
<dbReference type="InterPro" id="IPR036612">
    <property type="entry name" value="KH_dom_type_1_sf"/>
</dbReference>
<dbReference type="InterPro" id="IPR041174">
    <property type="entry name" value="KRR1-like_KH1"/>
</dbReference>
<dbReference type="InterPro" id="IPR048550">
    <property type="entry name" value="KRR1-like_KH1_euk"/>
</dbReference>
<dbReference type="InterPro" id="IPR048548">
    <property type="entry name" value="KRR1-like_KH2"/>
</dbReference>
<dbReference type="InterPro" id="IPR048549">
    <property type="entry name" value="KRR1-like_KH2_euk"/>
</dbReference>
<dbReference type="InterPro" id="IPR024166">
    <property type="entry name" value="rRNA_assembly_KRR1"/>
</dbReference>
<dbReference type="PANTHER" id="PTHR12581">
    <property type="entry name" value="HIV-1 REV BINDING PROTEIN 2, 3"/>
    <property type="match status" value="1"/>
</dbReference>
<dbReference type="PANTHER" id="PTHR12581:SF0">
    <property type="entry name" value="KRR1 SMALL SUBUNIT PROCESSOME COMPONENT HOMOLOG"/>
    <property type="match status" value="1"/>
</dbReference>
<dbReference type="Pfam" id="PF17903">
    <property type="entry name" value="KH_KRR1_1st"/>
    <property type="match status" value="1"/>
</dbReference>
<dbReference type="Pfam" id="PF21800">
    <property type="entry name" value="KH_KRR1_2nd"/>
    <property type="match status" value="1"/>
</dbReference>
<dbReference type="PIRSF" id="PIRSF006515">
    <property type="entry name" value="KRR1"/>
    <property type="match status" value="1"/>
</dbReference>
<dbReference type="SMART" id="SM00322">
    <property type="entry name" value="KH"/>
    <property type="match status" value="1"/>
</dbReference>
<dbReference type="SUPFAM" id="SSF54791">
    <property type="entry name" value="Eukaryotic type KH-domain (KH-domain type I)"/>
    <property type="match status" value="1"/>
</dbReference>
<protein>
    <recommendedName>
        <fullName>KRR1 small subunit processome component</fullName>
    </recommendedName>
    <alternativeName>
        <fullName>KRR-R motif-containing protein 1</fullName>
    </alternativeName>
    <alternativeName>
        <fullName>Ribosomal RNA assembly protein KRR1</fullName>
    </alternativeName>
</protein>
<comment type="function">
    <text evidence="2 3 6 7">Required for 40S ribosome biogenesis. Involved in nucleolar processing of pre-18S ribosomal RNA and ribosome assembly. Essential for vegetative growth.</text>
</comment>
<comment type="subunit">
    <text evidence="2 6 7">Component of the ribosomal small subunit (SSU) processome composed of at least 40 protein subunits and snoRNA U3. Interacts with snoRNA U3. Interacts with MPP10, KRI1 and with ribosomal proteins RPS1A, RPS4A, RPS4B, RPS8A, RPS8B, RPS11A, RPS11B, RPS13, RPS24, RPS25, RPL4A, RPL7B, RPL8, RPL23, RPL25 and RPL28.</text>
</comment>
<comment type="interaction">
    <interactant intactId="EBI-21773">
        <id>P25586</id>
    </interactant>
    <interactant intactId="EBI-6482">
        <id>P38333</id>
        <label>ENP1</label>
    </interactant>
    <organismsDiffer>false</organismsDiffer>
    <experiments>6</experiments>
</comment>
<comment type="interaction">
    <interactant intactId="EBI-21773">
        <id>P25586</id>
    </interactant>
    <interactant intactId="EBI-28360">
        <id>P42846</id>
        <label>KRI1</label>
    </interactant>
    <organismsDiffer>false</organismsDiffer>
    <experiments>3</experiments>
</comment>
<comment type="interaction">
    <interactant intactId="EBI-21773">
        <id>P25586</id>
    </interactant>
    <interactant intactId="EBI-6838">
        <id>P15646</id>
        <label>NOP1</label>
    </interactant>
    <organismsDiffer>false</organismsDiffer>
    <experiments>5</experiments>
</comment>
<comment type="interaction">
    <interactant intactId="EBI-21773">
        <id>P25586</id>
    </interactant>
    <interactant intactId="EBI-31770">
        <id>Q12481</id>
        <label>RRP36</label>
    </interactant>
    <organismsDiffer>false</organismsDiffer>
    <experiments>4</experiments>
</comment>
<comment type="interaction">
    <interactant intactId="EBI-21773">
        <id>P25586</id>
    </interactant>
    <interactant intactId="EBI-36084">
        <id>Q12136</id>
        <label>SAS10</label>
    </interactant>
    <organismsDiffer>false</organismsDiffer>
    <experiments>4</experiments>
</comment>
<comment type="interaction">
    <interactant intactId="EBI-21773">
        <id>P25586</id>
    </interactant>
    <interactant intactId="EBI-29168">
        <id>P53866</id>
        <label>SQS1</label>
    </interactant>
    <organismsDiffer>false</organismsDiffer>
    <experiments>2</experiments>
</comment>
<comment type="interaction">
    <interactant intactId="EBI-21773">
        <id>P25586</id>
    </interactant>
    <interactant intactId="EBI-27917">
        <id>Q04500</id>
        <label>UTP14</label>
    </interactant>
    <organismsDiffer>false</organismsDiffer>
    <experiments>3</experiments>
</comment>
<comment type="interaction">
    <interactant intactId="EBI-21773">
        <id>P25586</id>
    </interactant>
    <interactant intactId="EBI-4534">
        <id>P40362</id>
        <label>UTP18</label>
    </interactant>
    <organismsDiffer>false</organismsDiffer>
    <experiments>3</experiments>
</comment>
<comment type="interaction">
    <interactant intactId="EBI-21773">
        <id>P25586</id>
    </interactant>
    <interactant intactId="EBI-1878">
        <id>P53254</id>
        <label>UTP22</label>
    </interactant>
    <organismsDiffer>false</organismsDiffer>
    <experiments>4</experiments>
</comment>
<comment type="interaction">
    <interactant intactId="EBI-21773">
        <id>P25586</id>
    </interactant>
    <interactant intactId="EBI-22119">
        <id>Q02354</id>
        <label>UTP6</label>
    </interactant>
    <organismsDiffer>false</organismsDiffer>
    <experiments>4</experiments>
</comment>
<comment type="subcellular location">
    <subcellularLocation>
        <location evidence="2 3 4 6 7">Nucleus</location>
        <location evidence="2 3 4 6 7">Nucleolus</location>
    </subcellularLocation>
</comment>
<comment type="miscellaneous">
    <text evidence="5">Present with 4340 molecules/cell in log phase SD medium.</text>
</comment>
<comment type="miscellaneous">
    <text>Cold-sensitive mutant KRR1-21 is a deletion of amino acids 234-239.</text>
</comment>
<comment type="similarity">
    <text evidence="8">Belongs to the KRR1 family.</text>
</comment>
<name>KRR1_YEAST</name>
<gene>
    <name type="primary">KRR1</name>
    <name type="ordered locus">YCL059C</name>
    <name type="ORF">YCL59C</name>
</gene>
<reference key="1">
    <citation type="journal article" date="1992" name="Nature">
        <title>The complete DNA sequence of yeast chromosome III.</title>
        <authorList>
            <person name="Oliver S.G."/>
            <person name="van der Aart Q.J.M."/>
            <person name="Agostoni-Carbone M.L."/>
            <person name="Aigle M."/>
            <person name="Alberghina L."/>
            <person name="Alexandraki D."/>
            <person name="Antoine G."/>
            <person name="Anwar R."/>
            <person name="Ballesta J.P.G."/>
            <person name="Benit P."/>
            <person name="Berben G."/>
            <person name="Bergantino E."/>
            <person name="Biteau N."/>
            <person name="Bolle P.-A."/>
            <person name="Bolotin-Fukuhara M."/>
            <person name="Brown A."/>
            <person name="Brown A.J.P."/>
            <person name="Buhler J.-M."/>
            <person name="Carcano C."/>
            <person name="Carignani G."/>
            <person name="Cederberg H."/>
            <person name="Chanet R."/>
            <person name="Contreras R."/>
            <person name="Crouzet M."/>
            <person name="Daignan-Fornier B."/>
            <person name="Defoor E."/>
            <person name="Delgado M.D."/>
            <person name="Demolder J."/>
            <person name="Doira C."/>
            <person name="Dubois E."/>
            <person name="Dujon B."/>
            <person name="Duesterhoeft A."/>
            <person name="Erdmann D."/>
            <person name="Esteban M."/>
            <person name="Fabre F."/>
            <person name="Fairhead C."/>
            <person name="Faye G."/>
            <person name="Feldmann H."/>
            <person name="Fiers W."/>
            <person name="Francingues-Gaillard M.-C."/>
            <person name="Franco L."/>
            <person name="Frontali L."/>
            <person name="Fukuhara H."/>
            <person name="Fuller L.J."/>
            <person name="Galland P."/>
            <person name="Gent M.E."/>
            <person name="Gigot D."/>
            <person name="Gilliquet V."/>
            <person name="Glansdorff N."/>
            <person name="Goffeau A."/>
            <person name="Grenson M."/>
            <person name="Grisanti P."/>
            <person name="Grivell L.A."/>
            <person name="de Haan M."/>
            <person name="Haasemann M."/>
            <person name="Hatat D."/>
            <person name="Hoenicka J."/>
            <person name="Hegemann J.H."/>
            <person name="Herbert C.J."/>
            <person name="Hilger F."/>
            <person name="Hohmann S."/>
            <person name="Hollenberg C.P."/>
            <person name="Huse K."/>
            <person name="Iborra F."/>
            <person name="Indge K.J."/>
            <person name="Isono K."/>
            <person name="Jacq C."/>
            <person name="Jacquet M."/>
            <person name="James C.M."/>
            <person name="Jauniaux J.-C."/>
            <person name="Jia Y."/>
            <person name="Jimenez A."/>
            <person name="Kelly A."/>
            <person name="Kleinhans U."/>
            <person name="Kreisl P."/>
            <person name="Lanfranchi G."/>
            <person name="Lewis C."/>
            <person name="van der Linden C.G."/>
            <person name="Lucchini G."/>
            <person name="Lutzenkirchen K."/>
            <person name="Maat M.J."/>
            <person name="Mallet L."/>
            <person name="Mannhaupt G."/>
            <person name="Martegani E."/>
            <person name="Mathieu A."/>
            <person name="Maurer C.T.C."/>
            <person name="McConnell D."/>
            <person name="McKee R.A."/>
            <person name="Messenguy F."/>
            <person name="Mewes H.-W."/>
            <person name="Molemans F."/>
            <person name="Montague M.A."/>
            <person name="Muzi Falconi M."/>
            <person name="Navas L."/>
            <person name="Newlon C.S."/>
            <person name="Noone D."/>
            <person name="Pallier C."/>
            <person name="Panzeri L."/>
            <person name="Pearson B.M."/>
            <person name="Perea J."/>
            <person name="Philippsen P."/>
            <person name="Pierard A."/>
            <person name="Planta R.J."/>
            <person name="Plevani P."/>
            <person name="Poetsch B."/>
            <person name="Pohl F.M."/>
            <person name="Purnelle B."/>
            <person name="Ramezani Rad M."/>
            <person name="Rasmussen S.W."/>
            <person name="Raynal A."/>
            <person name="Remacha M.A."/>
            <person name="Richterich P."/>
            <person name="Roberts A.B."/>
            <person name="Rodriguez F."/>
            <person name="Sanz E."/>
            <person name="Schaaff-Gerstenschlaeger I."/>
            <person name="Scherens B."/>
            <person name="Schweitzer B."/>
            <person name="Shu Y."/>
            <person name="Skala J."/>
            <person name="Slonimski P.P."/>
            <person name="Sor F."/>
            <person name="Soustelle C."/>
            <person name="Spiegelberg R."/>
            <person name="Stateva L.I."/>
            <person name="Steensma H.Y."/>
            <person name="Steiner S."/>
            <person name="Thierry A."/>
            <person name="Thireos G."/>
            <person name="Tzermia M."/>
            <person name="Urrestarazu L.A."/>
            <person name="Valle G."/>
            <person name="Vetter I."/>
            <person name="van Vliet-Reedijk J.C."/>
            <person name="Voet M."/>
            <person name="Volckaert G."/>
            <person name="Vreken P."/>
            <person name="Wang H."/>
            <person name="Warmington J.R."/>
            <person name="von Wettstein D."/>
            <person name="Wicksteed B.L."/>
            <person name="Wilson C."/>
            <person name="Wurst H."/>
            <person name="Xu G."/>
            <person name="Yoshikawa A."/>
            <person name="Zimmermann F.K."/>
            <person name="Sgouros J.G."/>
        </authorList>
    </citation>
    <scope>NUCLEOTIDE SEQUENCE [LARGE SCALE GENOMIC DNA]</scope>
    <source>
        <strain>ATCC 204508 / S288c</strain>
    </source>
</reference>
<reference key="2">
    <citation type="journal article" date="2014" name="G3 (Bethesda)">
        <title>The reference genome sequence of Saccharomyces cerevisiae: Then and now.</title>
        <authorList>
            <person name="Engel S.R."/>
            <person name="Dietrich F.S."/>
            <person name="Fisk D.G."/>
            <person name="Binkley G."/>
            <person name="Balakrishnan R."/>
            <person name="Costanzo M.C."/>
            <person name="Dwight S.S."/>
            <person name="Hitz B.C."/>
            <person name="Karra K."/>
            <person name="Nash R.S."/>
            <person name="Weng S."/>
            <person name="Wong E.D."/>
            <person name="Lloyd P."/>
            <person name="Skrzypek M.S."/>
            <person name="Miyasato S.R."/>
            <person name="Simison M."/>
            <person name="Cherry J.M."/>
        </authorList>
    </citation>
    <scope>GENOME REANNOTATION</scope>
    <source>
        <strain>ATCC 204508 / S288c</strain>
    </source>
</reference>
<reference key="3">
    <citation type="journal article" date="2007" name="Genome Res.">
        <title>Approaching a complete repository of sequence-verified protein-encoding clones for Saccharomyces cerevisiae.</title>
        <authorList>
            <person name="Hu Y."/>
            <person name="Rolfs A."/>
            <person name="Bhullar B."/>
            <person name="Murthy T.V.S."/>
            <person name="Zhu C."/>
            <person name="Berger M.F."/>
            <person name="Camargo A.A."/>
            <person name="Kelley F."/>
            <person name="McCarron S."/>
            <person name="Jepson D."/>
            <person name="Richardson A."/>
            <person name="Raphael J."/>
            <person name="Moreira D."/>
            <person name="Taycher E."/>
            <person name="Zuo D."/>
            <person name="Mohr S."/>
            <person name="Kane M.F."/>
            <person name="Williamson J."/>
            <person name="Simpson A.J.G."/>
            <person name="Bulyk M.L."/>
            <person name="Harlow E."/>
            <person name="Marsischky G."/>
            <person name="Kolodner R.D."/>
            <person name="LaBaer J."/>
        </authorList>
    </citation>
    <scope>NUCLEOTIDE SEQUENCE [GENOMIC DNA]</scope>
    <source>
        <strain>ATCC 204508 / S288c</strain>
    </source>
</reference>
<reference key="4">
    <citation type="journal article" date="1996" name="Gene">
        <title>A novel cross-phylum family of proteins comprises a KRR1 (YCL059c) gene which is essential for viability of Saccharomyces cerevisiae cells.</title>
        <authorList>
            <person name="Gromadka R."/>
            <person name="Kaniak A."/>
            <person name="Slonimski P.P."/>
            <person name="Rytka J."/>
        </authorList>
    </citation>
    <scope>IDENTIFICATION</scope>
</reference>
<reference key="5">
    <citation type="journal article" date="2000" name="Acta Biochim. Pol.">
        <title>The KRR1 gene encodes a protein required for 18S rRNA synthesis and 40S ribosomal subunit assembly in Saccharomyces cerevisiae.</title>
        <authorList>
            <person name="Gromadka R."/>
            <person name="Rytka J."/>
        </authorList>
    </citation>
    <scope>FUNCTION</scope>
    <scope>SUBCELLULAR LOCATION</scope>
</reference>
<reference key="6">
    <citation type="journal article" date="2000" name="Mol. Cell. Biol.">
        <title>Yeast Krr1p physically and functionally interacts with a novel essential Kri1p, and both proteins are required for 40S ribosome biogenesis in the nucleolus.</title>
        <authorList>
            <person name="Sasaki T."/>
            <person name="Toh-e A."/>
            <person name="Kikuchi Y."/>
        </authorList>
    </citation>
    <scope>FUNCTION</scope>
    <scope>INTERACTION WITH KRI1</scope>
    <scope>SUBCELLULAR LOCATION</scope>
    <scope>MUTAGENESIS OF LYS-20; PHE-45; LYS-66; LEU-95; CYS-162; ARG-207 AND ASP-261</scope>
</reference>
<reference key="7">
    <citation type="journal article" date="2003" name="Nature">
        <title>Global analysis of protein localization in budding yeast.</title>
        <authorList>
            <person name="Huh W.-K."/>
            <person name="Falvo J.V."/>
            <person name="Gerke L.C."/>
            <person name="Carroll A.S."/>
            <person name="Howson R.W."/>
            <person name="Weissman J.S."/>
            <person name="O'Shea E.K."/>
        </authorList>
    </citation>
    <scope>SUBCELLULAR LOCATION [LARGE SCALE ANALYSIS]</scope>
</reference>
<reference key="8">
    <citation type="journal article" date="2003" name="Nature">
        <title>Global analysis of protein expression in yeast.</title>
        <authorList>
            <person name="Ghaemmaghami S."/>
            <person name="Huh W.-K."/>
            <person name="Bower K."/>
            <person name="Howson R.W."/>
            <person name="Belle A."/>
            <person name="Dephoure N."/>
            <person name="O'Shea E.K."/>
            <person name="Weissman J.S."/>
        </authorList>
    </citation>
    <scope>LEVEL OF PROTEIN EXPRESSION [LARGE SCALE ANALYSIS]</scope>
</reference>
<reference key="9">
    <citation type="journal article" date="2004" name="Acta Biochim. Pol.">
        <title>Functional and physical interactions of Krr1p, a Saccharomyces cerevisiae nucleolar protein.</title>
        <authorList>
            <person name="Gromadka R."/>
            <person name="Karkusiewicz I."/>
            <person name="Rempola B."/>
            <person name="Rytka J."/>
        </authorList>
    </citation>
    <scope>FUNCTION</scope>
    <scope>INTERACTION WITH RIBOSOMAL PROTEINS AND KRI1</scope>
    <scope>SUBCELLULAR LOCATION</scope>
    <scope>MUTANT KRR1-21</scope>
</reference>
<reference key="10">
    <citation type="journal article" date="2004" name="Eukaryot. Cell">
        <title>The small-subunit processome is a ribosome assembly intermediate.</title>
        <authorList>
            <person name="Bernstein K.A."/>
            <person name="Gallagher J.E.G."/>
            <person name="Mitchell B.M."/>
            <person name="Granneman S."/>
            <person name="Baserga S.J."/>
        </authorList>
    </citation>
    <scope>FUNCTION</scope>
    <scope>INTERACTION WITH MPP10 AND SNORNA U3</scope>
    <scope>IDENTIFICATION IN SSU PROCESSOME</scope>
    <scope>SUBCELLULAR LOCATION</scope>
</reference>